<reference key="1">
    <citation type="journal article" date="2002" name="Proc. Natl. Acad. Sci. U.S.A.">
        <title>Genome sequence of a serotype M3 strain of group A Streptococcus: phage-encoded toxins, the high-virulence phenotype, and clone emergence.</title>
        <authorList>
            <person name="Beres S.B."/>
            <person name="Sylva G.L."/>
            <person name="Barbian K.D."/>
            <person name="Lei B."/>
            <person name="Hoff J.S."/>
            <person name="Mammarella N.D."/>
            <person name="Liu M.-Y."/>
            <person name="Smoot J.C."/>
            <person name="Porcella S.F."/>
            <person name="Parkins L.D."/>
            <person name="Campbell D.S."/>
            <person name="Smith T.M."/>
            <person name="McCormick J.K."/>
            <person name="Leung D.Y.M."/>
            <person name="Schlievert P.M."/>
            <person name="Musser J.M."/>
        </authorList>
    </citation>
    <scope>NUCLEOTIDE SEQUENCE [LARGE SCALE GENOMIC DNA]</scope>
    <source>
        <strain>ATCC BAA-595 / MGAS315</strain>
    </source>
</reference>
<comment type="function">
    <text evidence="1">One of the primary rRNA binding proteins, it binds directly to 16S rRNA where it nucleates assembly of the body of the 30S subunit.</text>
</comment>
<comment type="function">
    <text evidence="1">With S5 and S12 plays an important role in translational accuracy.</text>
</comment>
<comment type="subunit">
    <text evidence="1">Part of the 30S ribosomal subunit. Contacts protein S5. The interaction surface between S4 and S5 is involved in control of translational fidelity.</text>
</comment>
<comment type="similarity">
    <text evidence="1">Belongs to the universal ribosomal protein uS4 family.</text>
</comment>
<accession>P0DE92</accession>
<accession>P66568</accession>
<accession>Q99XJ4</accession>
<evidence type="ECO:0000255" key="1">
    <source>
        <dbReference type="HAMAP-Rule" id="MF_01306"/>
    </source>
</evidence>
<evidence type="ECO:0000305" key="2"/>
<keyword id="KW-0687">Ribonucleoprotein</keyword>
<keyword id="KW-0689">Ribosomal protein</keyword>
<keyword id="KW-0694">RNA-binding</keyword>
<keyword id="KW-0699">rRNA-binding</keyword>
<gene>
    <name evidence="1" type="primary">rpsD</name>
    <name type="ordered locus">SpyM3_1833</name>
</gene>
<feature type="chain" id="PRO_0000132474" description="Small ribosomal subunit protein uS4">
    <location>
        <begin position="1"/>
        <end position="203"/>
    </location>
</feature>
<feature type="domain" description="S4 RNA-binding" evidence="1">
    <location>
        <begin position="93"/>
        <end position="156"/>
    </location>
</feature>
<proteinExistence type="inferred from homology"/>
<protein>
    <recommendedName>
        <fullName evidence="1">Small ribosomal subunit protein uS4</fullName>
    </recommendedName>
    <alternativeName>
        <fullName evidence="2">30S ribosomal protein S4</fullName>
    </alternativeName>
</protein>
<sequence length="203" mass="23123">MSRYTGPSWKQSRRLGLSLTGTGKELARRNYVPGQHGPNNRSKLSEYGLQLAEKQKLRFSYGLGEKQFRNLFVQATKIKEGTLGFNFMVLLERRLDNVVYRLGLATTRRQARQFVNHGHILVDGKRVDIPSYRVDPGQVISVREKSMKVPAILEAVEATLGRPAFVSFDAEKLEGSLTRLPERDEINPEINEALVVEFYNKML</sequence>
<dbReference type="EMBL" id="AE014074">
    <property type="protein sequence ID" value="AAM80440.1"/>
    <property type="molecule type" value="Genomic_DNA"/>
</dbReference>
<dbReference type="RefSeq" id="WP_002982092.1">
    <property type="nucleotide sequence ID" value="NC_004070.1"/>
</dbReference>
<dbReference type="SMR" id="P0DE92"/>
<dbReference type="GeneID" id="69901600"/>
<dbReference type="KEGG" id="spg:SpyM3_1833"/>
<dbReference type="HOGENOM" id="CLU_092403_0_1_9"/>
<dbReference type="Proteomes" id="UP000000564">
    <property type="component" value="Chromosome"/>
</dbReference>
<dbReference type="GO" id="GO:0015935">
    <property type="term" value="C:small ribosomal subunit"/>
    <property type="evidence" value="ECO:0007669"/>
    <property type="project" value="InterPro"/>
</dbReference>
<dbReference type="GO" id="GO:0019843">
    <property type="term" value="F:rRNA binding"/>
    <property type="evidence" value="ECO:0007669"/>
    <property type="project" value="UniProtKB-UniRule"/>
</dbReference>
<dbReference type="GO" id="GO:0003735">
    <property type="term" value="F:structural constituent of ribosome"/>
    <property type="evidence" value="ECO:0007669"/>
    <property type="project" value="InterPro"/>
</dbReference>
<dbReference type="GO" id="GO:0042274">
    <property type="term" value="P:ribosomal small subunit biogenesis"/>
    <property type="evidence" value="ECO:0007669"/>
    <property type="project" value="TreeGrafter"/>
</dbReference>
<dbReference type="GO" id="GO:0006412">
    <property type="term" value="P:translation"/>
    <property type="evidence" value="ECO:0007669"/>
    <property type="project" value="UniProtKB-UniRule"/>
</dbReference>
<dbReference type="CDD" id="cd00165">
    <property type="entry name" value="S4"/>
    <property type="match status" value="1"/>
</dbReference>
<dbReference type="FunFam" id="1.10.1050.10:FF:000001">
    <property type="entry name" value="30S ribosomal protein S4"/>
    <property type="match status" value="1"/>
</dbReference>
<dbReference type="FunFam" id="3.10.290.10:FF:000001">
    <property type="entry name" value="30S ribosomal protein S4"/>
    <property type="match status" value="1"/>
</dbReference>
<dbReference type="Gene3D" id="1.10.1050.10">
    <property type="entry name" value="Ribosomal Protein S4 Delta 41, Chain A, domain 1"/>
    <property type="match status" value="1"/>
</dbReference>
<dbReference type="Gene3D" id="3.10.290.10">
    <property type="entry name" value="RNA-binding S4 domain"/>
    <property type="match status" value="1"/>
</dbReference>
<dbReference type="HAMAP" id="MF_01306_B">
    <property type="entry name" value="Ribosomal_uS4_B"/>
    <property type="match status" value="1"/>
</dbReference>
<dbReference type="InterPro" id="IPR022801">
    <property type="entry name" value="Ribosomal_uS4"/>
</dbReference>
<dbReference type="InterPro" id="IPR005709">
    <property type="entry name" value="Ribosomal_uS4_bac-type"/>
</dbReference>
<dbReference type="InterPro" id="IPR018079">
    <property type="entry name" value="Ribosomal_uS4_CS"/>
</dbReference>
<dbReference type="InterPro" id="IPR001912">
    <property type="entry name" value="Ribosomal_uS4_N"/>
</dbReference>
<dbReference type="InterPro" id="IPR002942">
    <property type="entry name" value="S4_RNA-bd"/>
</dbReference>
<dbReference type="InterPro" id="IPR036986">
    <property type="entry name" value="S4_RNA-bd_sf"/>
</dbReference>
<dbReference type="NCBIfam" id="NF003717">
    <property type="entry name" value="PRK05327.1"/>
    <property type="match status" value="1"/>
</dbReference>
<dbReference type="NCBIfam" id="TIGR01017">
    <property type="entry name" value="rpsD_bact"/>
    <property type="match status" value="1"/>
</dbReference>
<dbReference type="PANTHER" id="PTHR11831">
    <property type="entry name" value="30S 40S RIBOSOMAL PROTEIN"/>
    <property type="match status" value="1"/>
</dbReference>
<dbReference type="PANTHER" id="PTHR11831:SF4">
    <property type="entry name" value="SMALL RIBOSOMAL SUBUNIT PROTEIN US4M"/>
    <property type="match status" value="1"/>
</dbReference>
<dbReference type="Pfam" id="PF00163">
    <property type="entry name" value="Ribosomal_S4"/>
    <property type="match status" value="1"/>
</dbReference>
<dbReference type="Pfam" id="PF01479">
    <property type="entry name" value="S4"/>
    <property type="match status" value="1"/>
</dbReference>
<dbReference type="SMART" id="SM01390">
    <property type="entry name" value="Ribosomal_S4"/>
    <property type="match status" value="1"/>
</dbReference>
<dbReference type="SMART" id="SM00363">
    <property type="entry name" value="S4"/>
    <property type="match status" value="1"/>
</dbReference>
<dbReference type="SUPFAM" id="SSF55174">
    <property type="entry name" value="Alpha-L RNA-binding motif"/>
    <property type="match status" value="1"/>
</dbReference>
<dbReference type="PROSITE" id="PS00632">
    <property type="entry name" value="RIBOSOMAL_S4"/>
    <property type="match status" value="1"/>
</dbReference>
<dbReference type="PROSITE" id="PS50889">
    <property type="entry name" value="S4"/>
    <property type="match status" value="1"/>
</dbReference>
<organism>
    <name type="scientific">Streptococcus pyogenes serotype M3 (strain ATCC BAA-595 / MGAS315)</name>
    <dbReference type="NCBI Taxonomy" id="198466"/>
    <lineage>
        <taxon>Bacteria</taxon>
        <taxon>Bacillati</taxon>
        <taxon>Bacillota</taxon>
        <taxon>Bacilli</taxon>
        <taxon>Lactobacillales</taxon>
        <taxon>Streptococcaceae</taxon>
        <taxon>Streptococcus</taxon>
    </lineage>
</organism>
<name>RS4_STRP3</name>